<feature type="chain" id="PRO_0000326857" description="Acylphosphatase">
    <location>
        <begin position="1"/>
        <end position="91"/>
    </location>
</feature>
<feature type="domain" description="Acylphosphatase-like" evidence="1">
    <location>
        <begin position="5"/>
        <end position="91"/>
    </location>
</feature>
<feature type="active site" evidence="1">
    <location>
        <position position="20"/>
    </location>
</feature>
<feature type="active site" evidence="1">
    <location>
        <position position="38"/>
    </location>
</feature>
<keyword id="KW-0378">Hydrolase</keyword>
<keyword id="KW-1185">Reference proteome</keyword>
<protein>
    <recommendedName>
        <fullName>Acylphosphatase</fullName>
        <ecNumber>3.6.1.7</ecNumber>
    </recommendedName>
    <alternativeName>
        <fullName>Acylphosphate phosphohydrolase</fullName>
    </alternativeName>
</protein>
<gene>
    <name type="primary">acyP</name>
    <name type="ordered locus">rrnAC1167</name>
</gene>
<sequence length="91" mass="10303">MAHTRAHVFVSGRVQGVYYRATTRERAQDQGVNGWVRNLDDGRVEAVFEGPDADVEAMVEFCHEGSERANVTDVEVEYEDPEGVDGFEVRW</sequence>
<comment type="catalytic activity">
    <reaction>
        <text>an acyl phosphate + H2O = a carboxylate + phosphate + H(+)</text>
        <dbReference type="Rhea" id="RHEA:14965"/>
        <dbReference type="ChEBI" id="CHEBI:15377"/>
        <dbReference type="ChEBI" id="CHEBI:15378"/>
        <dbReference type="ChEBI" id="CHEBI:29067"/>
        <dbReference type="ChEBI" id="CHEBI:43474"/>
        <dbReference type="ChEBI" id="CHEBI:59918"/>
        <dbReference type="EC" id="3.6.1.7"/>
    </reaction>
</comment>
<comment type="similarity">
    <text evidence="2">Belongs to the acylphosphatase family.</text>
</comment>
<dbReference type="EC" id="3.6.1.7"/>
<dbReference type="EMBL" id="AY596297">
    <property type="protein sequence ID" value="AAV46118.1"/>
    <property type="molecule type" value="Genomic_DNA"/>
</dbReference>
<dbReference type="SMR" id="Q5V2Y4"/>
<dbReference type="STRING" id="272569.rrnAC1167"/>
<dbReference type="PaxDb" id="272569-rrnAC1167"/>
<dbReference type="EnsemblBacteria" id="AAV46118">
    <property type="protein sequence ID" value="AAV46118"/>
    <property type="gene ID" value="rrnAC1167"/>
</dbReference>
<dbReference type="KEGG" id="hma:rrnAC1167"/>
<dbReference type="PATRIC" id="fig|272569.17.peg.1884"/>
<dbReference type="eggNOG" id="arCOG01674">
    <property type="taxonomic scope" value="Archaea"/>
</dbReference>
<dbReference type="HOGENOM" id="CLU_141932_3_2_2"/>
<dbReference type="Proteomes" id="UP000001169">
    <property type="component" value="Chromosome I"/>
</dbReference>
<dbReference type="GO" id="GO:0003998">
    <property type="term" value="F:acylphosphatase activity"/>
    <property type="evidence" value="ECO:0007669"/>
    <property type="project" value="UniProtKB-EC"/>
</dbReference>
<dbReference type="Gene3D" id="3.30.70.100">
    <property type="match status" value="1"/>
</dbReference>
<dbReference type="InterPro" id="IPR020456">
    <property type="entry name" value="Acylphosphatase"/>
</dbReference>
<dbReference type="InterPro" id="IPR001792">
    <property type="entry name" value="Acylphosphatase-like_dom"/>
</dbReference>
<dbReference type="InterPro" id="IPR036046">
    <property type="entry name" value="Acylphosphatase-like_dom_sf"/>
</dbReference>
<dbReference type="InterPro" id="IPR017968">
    <property type="entry name" value="Acylphosphatase_CS"/>
</dbReference>
<dbReference type="NCBIfam" id="NF011016">
    <property type="entry name" value="PRK14444.1"/>
    <property type="match status" value="1"/>
</dbReference>
<dbReference type="PANTHER" id="PTHR47268">
    <property type="entry name" value="ACYLPHOSPHATASE"/>
    <property type="match status" value="1"/>
</dbReference>
<dbReference type="PANTHER" id="PTHR47268:SF4">
    <property type="entry name" value="ACYLPHOSPHATASE"/>
    <property type="match status" value="1"/>
</dbReference>
<dbReference type="Pfam" id="PF00708">
    <property type="entry name" value="Acylphosphatase"/>
    <property type="match status" value="1"/>
</dbReference>
<dbReference type="PRINTS" id="PR00112">
    <property type="entry name" value="ACYLPHPHTASE"/>
</dbReference>
<dbReference type="SUPFAM" id="SSF54975">
    <property type="entry name" value="Acylphosphatase/BLUF domain-like"/>
    <property type="match status" value="1"/>
</dbReference>
<dbReference type="PROSITE" id="PS00151">
    <property type="entry name" value="ACYLPHOSPHATASE_2"/>
    <property type="match status" value="1"/>
</dbReference>
<dbReference type="PROSITE" id="PS51160">
    <property type="entry name" value="ACYLPHOSPHATASE_3"/>
    <property type="match status" value="1"/>
</dbReference>
<accession>Q5V2Y4</accession>
<reference key="1">
    <citation type="journal article" date="2004" name="Genome Res.">
        <title>Genome sequence of Haloarcula marismortui: a halophilic archaeon from the Dead Sea.</title>
        <authorList>
            <person name="Baliga N.S."/>
            <person name="Bonneau R."/>
            <person name="Facciotti M.T."/>
            <person name="Pan M."/>
            <person name="Glusman G."/>
            <person name="Deutsch E.W."/>
            <person name="Shannon P."/>
            <person name="Chiu Y."/>
            <person name="Weng R.S."/>
            <person name="Gan R.R."/>
            <person name="Hung P."/>
            <person name="Date S.V."/>
            <person name="Marcotte E."/>
            <person name="Hood L."/>
            <person name="Ng W.V."/>
        </authorList>
    </citation>
    <scope>NUCLEOTIDE SEQUENCE [LARGE SCALE GENOMIC DNA]</scope>
    <source>
        <strain>ATCC 43049 / DSM 3752 / JCM 8966 / VKM B-1809</strain>
    </source>
</reference>
<organism>
    <name type="scientific">Haloarcula marismortui (strain ATCC 43049 / DSM 3752 / JCM 8966 / VKM B-1809)</name>
    <name type="common">Halobacterium marismortui</name>
    <dbReference type="NCBI Taxonomy" id="272569"/>
    <lineage>
        <taxon>Archaea</taxon>
        <taxon>Methanobacteriati</taxon>
        <taxon>Methanobacteriota</taxon>
        <taxon>Stenosarchaea group</taxon>
        <taxon>Halobacteria</taxon>
        <taxon>Halobacteriales</taxon>
        <taxon>Haloarculaceae</taxon>
        <taxon>Haloarcula</taxon>
    </lineage>
</organism>
<proteinExistence type="inferred from homology"/>
<evidence type="ECO:0000255" key="1">
    <source>
        <dbReference type="PROSITE-ProRule" id="PRU00520"/>
    </source>
</evidence>
<evidence type="ECO:0000305" key="2"/>
<name>ACYP_HALMA</name>